<keyword id="KW-0143">Chaperone</keyword>
<keyword id="KW-0963">Cytoplasm</keyword>
<proteinExistence type="inferred from homology"/>
<protein>
    <recommendedName>
        <fullName>FAD assembly factor SdhE</fullName>
    </recommendedName>
</protein>
<reference key="1">
    <citation type="submission" date="2002-12" db="EMBL/GenBank/DDBJ databases">
        <title>Complete genome sequence of Vibrio vulnificus CMCP6.</title>
        <authorList>
            <person name="Rhee J.H."/>
            <person name="Kim S.Y."/>
            <person name="Chung S.S."/>
            <person name="Kim J.J."/>
            <person name="Moon Y.H."/>
            <person name="Jeong H."/>
            <person name="Choy H.E."/>
        </authorList>
    </citation>
    <scope>NUCLEOTIDE SEQUENCE [LARGE SCALE GENOMIC DNA]</scope>
    <source>
        <strain>CMCP6</strain>
    </source>
</reference>
<organism>
    <name type="scientific">Vibrio vulnificus (strain CMCP6)</name>
    <dbReference type="NCBI Taxonomy" id="216895"/>
    <lineage>
        <taxon>Bacteria</taxon>
        <taxon>Pseudomonadati</taxon>
        <taxon>Pseudomonadota</taxon>
        <taxon>Gammaproteobacteria</taxon>
        <taxon>Vibrionales</taxon>
        <taxon>Vibrionaceae</taxon>
        <taxon>Vibrio</taxon>
    </lineage>
</organism>
<feature type="chain" id="PRO_0000214428" description="FAD assembly factor SdhE">
    <location>
        <begin position="1"/>
        <end position="86"/>
    </location>
</feature>
<name>SDHE_VIBVU</name>
<gene>
    <name type="primary">sdhE</name>
    <name type="ordered locus">VV1_1557</name>
</gene>
<sequence length="86" mass="10109">MYTTEEKARIRWACRRGMLELDVVVMPFFEECFEKLSEQEQRDFVSLLECDDPDLFTWVMGHGRSENLGHASMVDKIVAHNLSKVR</sequence>
<dbReference type="EMBL" id="AE016795">
    <property type="protein sequence ID" value="AAO09981.1"/>
    <property type="molecule type" value="Genomic_DNA"/>
</dbReference>
<dbReference type="RefSeq" id="WP_011079492.1">
    <property type="nucleotide sequence ID" value="NC_004459.3"/>
</dbReference>
<dbReference type="SMR" id="Q8DC84"/>
<dbReference type="KEGG" id="vvu:VV1_1557"/>
<dbReference type="HOGENOM" id="CLU_103054_2_2_6"/>
<dbReference type="Proteomes" id="UP000002275">
    <property type="component" value="Chromosome 1"/>
</dbReference>
<dbReference type="GO" id="GO:0005737">
    <property type="term" value="C:cytoplasm"/>
    <property type="evidence" value="ECO:0007669"/>
    <property type="project" value="UniProtKB-SubCell"/>
</dbReference>
<dbReference type="GO" id="GO:0006105">
    <property type="term" value="P:succinate metabolic process"/>
    <property type="evidence" value="ECO:0007669"/>
    <property type="project" value="TreeGrafter"/>
</dbReference>
<dbReference type="FunFam" id="1.10.150.250:FF:000001">
    <property type="entry name" value="FAD assembly factor SdhE"/>
    <property type="match status" value="1"/>
</dbReference>
<dbReference type="Gene3D" id="1.10.150.250">
    <property type="entry name" value="Flavinator of succinate dehydrogenase"/>
    <property type="match status" value="1"/>
</dbReference>
<dbReference type="InterPro" id="IPR005631">
    <property type="entry name" value="SDH"/>
</dbReference>
<dbReference type="InterPro" id="IPR036714">
    <property type="entry name" value="SDH_sf"/>
</dbReference>
<dbReference type="InterPro" id="IPR050531">
    <property type="entry name" value="SdhE_FAD_assembly_factor"/>
</dbReference>
<dbReference type="PANTHER" id="PTHR39585">
    <property type="entry name" value="FAD ASSEMBLY FACTOR SDHE"/>
    <property type="match status" value="1"/>
</dbReference>
<dbReference type="PANTHER" id="PTHR39585:SF1">
    <property type="entry name" value="FAD ASSEMBLY FACTOR SDHE"/>
    <property type="match status" value="1"/>
</dbReference>
<dbReference type="Pfam" id="PF03937">
    <property type="entry name" value="Sdh5"/>
    <property type="match status" value="1"/>
</dbReference>
<dbReference type="SUPFAM" id="SSF109910">
    <property type="entry name" value="YgfY-like"/>
    <property type="match status" value="1"/>
</dbReference>
<comment type="function">
    <text evidence="1">An FAD assembly protein, which accelerates covalent attachment of the cofactor into other proteins. Plays an essential role in the assembly of succinate dehydrogenase (SDH, respiratory complex II), an enzyme complex that is a component of both the tricarboxylic acid cycle and the electron transport chain, and which couples the oxidation of succinate to fumarate with the reduction of ubiquinone (coenzyme Q) to ubiquinol. Required for flavinylation (covalent attachment of FAD) of the flavoprotein subunit SdhA of SDH and other flavinylated proteins as well.</text>
</comment>
<comment type="subcellular location">
    <subcellularLocation>
        <location evidence="1">Cytoplasm</location>
    </subcellularLocation>
</comment>
<comment type="similarity">
    <text evidence="2">Belongs to the SdhE FAD assembly factor family.</text>
</comment>
<accession>Q8DC84</accession>
<evidence type="ECO:0000250" key="1">
    <source>
        <dbReference type="UniProtKB" id="G4V4G2"/>
    </source>
</evidence>
<evidence type="ECO:0000305" key="2"/>